<accession>Q03013</accession>
<accession>A8K765</accession>
<accession>Q05465</accession>
<accession>Q32NC1</accession>
<accession>Q4JNT8</accession>
<accession>Q6FH87</accession>
<proteinExistence type="evidence at protein level"/>
<evidence type="ECO:0000250" key="1"/>
<evidence type="ECO:0000250" key="2">
    <source>
        <dbReference type="UniProtKB" id="P08515"/>
    </source>
</evidence>
<evidence type="ECO:0000269" key="3">
    <source>
    </source>
</evidence>
<evidence type="ECO:0000269" key="4">
    <source>
    </source>
</evidence>
<evidence type="ECO:0000269" key="5">
    <source>
    </source>
</evidence>
<evidence type="ECO:0000269" key="6">
    <source>
    </source>
</evidence>
<evidence type="ECO:0000303" key="7">
    <source>
    </source>
</evidence>
<evidence type="ECO:0000303" key="8">
    <source>
    </source>
</evidence>
<evidence type="ECO:0000305" key="9"/>
<evidence type="ECO:0000305" key="10">
    <source>
    </source>
</evidence>
<evidence type="ECO:0007829" key="11">
    <source>
        <dbReference type="PDB" id="4GTU"/>
    </source>
</evidence>
<gene>
    <name type="primary">GSTM4</name>
</gene>
<sequence>MSMTLGYWDIRGLAHAIRLLLEYTDSSYEEKKYTMGDAPDYDRSQWLNEKFKLGLDFPNLPYLIDGAHKITQSNAILCYIARKHNLCGETEEEKIRVDILENQAMDVSNQLARVCYSPDFEKLKPEYLEELPTMMQHFSQFLGKRPWFVGDKITFVDFLAYDVLDLHRIFEPNCLDAFPNLKDFISRFEGLEKISAYMKSSRFLPKPLYTRVAVWGNK</sequence>
<comment type="function">
    <text evidence="3 4 5">Conjugation of reduced glutathione to a wide number of exogenous and endogenous hydrophobic electrophiles (PubMed:8203914, PubMed:8373352). Catalyzes the conjugation of leukotriene A4 with reduced glutathione (GSH) to form leukotriene C4 (PubMed:27791009). Can also catalyze the transfer of a glutathionyl group from glutathione (GSH) to 13(S),14(S)-epoxy-docosahexaenoic acid to form maresin conjugate in tissue regeneration 1 (MCTR1), a bioactive lipid mediator that possess potent anti-inflammatory and proresolving actions (PubMed:27791009).</text>
</comment>
<comment type="catalytic activity">
    <reaction evidence="4 5">
        <text>RX + glutathione = an S-substituted glutathione + a halide anion + H(+)</text>
        <dbReference type="Rhea" id="RHEA:16437"/>
        <dbReference type="ChEBI" id="CHEBI:15378"/>
        <dbReference type="ChEBI" id="CHEBI:16042"/>
        <dbReference type="ChEBI" id="CHEBI:17792"/>
        <dbReference type="ChEBI" id="CHEBI:57925"/>
        <dbReference type="ChEBI" id="CHEBI:90779"/>
        <dbReference type="EC" id="2.5.1.18"/>
    </reaction>
</comment>
<comment type="catalytic activity">
    <reaction evidence="4 5">
        <text>1-chloro-2,4-dinitrobenzene + glutathione = 2,4-dinitrophenyl-S-glutathione + chloride + H(+)</text>
        <dbReference type="Rhea" id="RHEA:51220"/>
        <dbReference type="ChEBI" id="CHEBI:15378"/>
        <dbReference type="ChEBI" id="CHEBI:17996"/>
        <dbReference type="ChEBI" id="CHEBI:34718"/>
        <dbReference type="ChEBI" id="CHEBI:57925"/>
        <dbReference type="ChEBI" id="CHEBI:133977"/>
        <dbReference type="EC" id="2.5.1.18"/>
    </reaction>
</comment>
<comment type="catalytic activity">
    <reaction evidence="3">
        <text>(13S,14S)-epoxy-(4Z,7Z,9E,11E,16Z,19Z)-docosahexaenoate + glutathione = (13R)-S-glutathionyl-(14S)-hydroxy-(4Z,7Z,9E,11E,16Z,19Z)-docosahexaenoate</text>
        <dbReference type="Rhea" id="RHEA:53508"/>
        <dbReference type="ChEBI" id="CHEBI:57925"/>
        <dbReference type="ChEBI" id="CHEBI:131958"/>
        <dbReference type="ChEBI" id="CHEBI:137407"/>
    </reaction>
</comment>
<comment type="catalytic activity">
    <reaction evidence="3">
        <text>leukotriene C4 = leukotriene A4 + glutathione</text>
        <dbReference type="Rhea" id="RHEA:17617"/>
        <dbReference type="ChEBI" id="CHEBI:57463"/>
        <dbReference type="ChEBI" id="CHEBI:57925"/>
        <dbReference type="ChEBI" id="CHEBI:57973"/>
        <dbReference type="EC" id="4.4.1.20"/>
    </reaction>
</comment>
<comment type="biophysicochemical properties">
    <kinetics>
        <KM evidence="4">1.8 mM for glutathione</KM>
        <KM evidence="3">98 uM for leukotriene A4</KM>
        <KM evidence="3">42.5 mM for (13R)-S-glutathionyl-(14S)-hydroxy-(4Z,7Z,9E,11E,16Z,19Z)-docosahexaenoate</KM>
        <KM evidence="4">9 mM for 1-chloro-2,4-dinitrobenzene</KM>
        <Vmax evidence="3">1.6 mmol/min/mg enzyme with leukotriene A4 as substrate</Vmax>
        <Vmax evidence="3">5.1 mmol/min/mg enzyme with (13S,14S)-epoxy-(4Z,7Z,9E,11E,16Z,19Z)-docosahexaenoate as substrate</Vmax>
    </kinetics>
</comment>
<comment type="subunit">
    <text evidence="5">Homodimer.</text>
</comment>
<comment type="interaction">
    <interactant intactId="EBI-713363">
        <id>Q03013</id>
    </interactant>
    <interactant intactId="EBI-77613">
        <id>P05067</id>
        <label>APP</label>
    </interactant>
    <organismsDiffer>false</organismsDiffer>
    <experiments>3</experiments>
</comment>
<comment type="interaction">
    <interactant intactId="EBI-713363">
        <id>Q03013</id>
    </interactant>
    <interactant intactId="EBI-350350">
        <id>P21266</id>
        <label>GSTM3</label>
    </interactant>
    <organismsDiffer>false</organismsDiffer>
    <experiments>7</experiments>
</comment>
<comment type="interaction">
    <interactant intactId="EBI-713363">
        <id>Q03013</id>
    </interactant>
    <interactant intactId="EBI-10209603">
        <id>Q6FGJ9</id>
        <label>GSTM3</label>
    </interactant>
    <organismsDiffer>false</organismsDiffer>
    <experiments>3</experiments>
</comment>
<comment type="interaction">
    <interactant intactId="EBI-713363">
        <id>Q03013</id>
    </interactant>
    <interactant intactId="EBI-4312072">
        <id>P46439</id>
        <label>GSTM5</label>
    </interactant>
    <organismsDiffer>false</organismsDiffer>
    <experiments>5</experiments>
</comment>
<comment type="subcellular location">
    <subcellularLocation>
        <location evidence="10">Cytoplasm</location>
    </subcellularLocation>
</comment>
<comment type="alternative products">
    <event type="alternative splicing"/>
    <isoform>
        <id>Q03013-1</id>
        <name>1</name>
        <sequence type="displayed"/>
    </isoform>
    <isoform>
        <id>Q03013-2</id>
        <name>2</name>
        <sequence type="described" ref="VSP_011773 VSP_011774"/>
    </isoform>
    <isoform>
        <id>Q03013-3</id>
        <name>3</name>
        <sequence type="described" ref="VSP_047688"/>
    </isoform>
</comment>
<comment type="tissue specificity">
    <text>Expressed in a wide variety of tissues.</text>
</comment>
<comment type="similarity">
    <text evidence="9">Belongs to the GST superfamily. Mu family.</text>
</comment>
<dbReference type="EC" id="2.5.1.18" evidence="4 5"/>
<dbReference type="EC" id="4.4.1.20" evidence="3"/>
<dbReference type="EMBL" id="M96234">
    <property type="protein sequence ID" value="AAA57347.1"/>
    <property type="molecule type" value="mRNA"/>
</dbReference>
<dbReference type="EMBL" id="M96233">
    <property type="protein sequence ID" value="AAA57346.1"/>
    <property type="molecule type" value="Genomic_DNA"/>
</dbReference>
<dbReference type="EMBL" id="X68677">
    <property type="protein sequence ID" value="CAA48637.1"/>
    <property type="molecule type" value="Genomic_DNA"/>
</dbReference>
<dbReference type="EMBL" id="M99422">
    <property type="protein sequence ID" value="AAA58623.1"/>
    <property type="molecule type" value="mRNA"/>
</dbReference>
<dbReference type="EMBL" id="DQ062813">
    <property type="protein sequence ID" value="AAY98515.1"/>
    <property type="molecule type" value="mRNA"/>
</dbReference>
<dbReference type="EMBL" id="CR541869">
    <property type="protein sequence ID" value="CAG46667.1"/>
    <property type="molecule type" value="mRNA"/>
</dbReference>
<dbReference type="EMBL" id="AK291880">
    <property type="protein sequence ID" value="BAF84569.1"/>
    <property type="molecule type" value="mRNA"/>
</dbReference>
<dbReference type="EMBL" id="AC000031">
    <property type="status" value="NOT_ANNOTATED_CDS"/>
    <property type="molecule type" value="Genomic_DNA"/>
</dbReference>
<dbReference type="EMBL" id="CH471122">
    <property type="protein sequence ID" value="EAW56405.1"/>
    <property type="molecule type" value="Genomic_DNA"/>
</dbReference>
<dbReference type="EMBL" id="BC015513">
    <property type="protein sequence ID" value="AAH15513.1"/>
    <property type="molecule type" value="mRNA"/>
</dbReference>
<dbReference type="EMBL" id="BC108729">
    <property type="protein sequence ID" value="AAI08730.1"/>
    <property type="molecule type" value="mRNA"/>
</dbReference>
<dbReference type="EMBL" id="X56837">
    <property type="protein sequence ID" value="CAA40167.1"/>
    <property type="molecule type" value="Genomic_DNA"/>
</dbReference>
<dbReference type="CCDS" id="CCDS806.1">
    <molecule id="Q03013-2"/>
</dbReference>
<dbReference type="CCDS" id="CCDS807.1">
    <molecule id="Q03013-1"/>
</dbReference>
<dbReference type="PIR" id="A47486">
    <property type="entry name" value="A47486"/>
</dbReference>
<dbReference type="PIR" id="S32425">
    <property type="entry name" value="S32425"/>
</dbReference>
<dbReference type="RefSeq" id="NP_000841.1">
    <molecule id="Q03013-1"/>
    <property type="nucleotide sequence ID" value="NM_000850.5"/>
</dbReference>
<dbReference type="RefSeq" id="NP_671489.1">
    <molecule id="Q03013-2"/>
    <property type="nucleotide sequence ID" value="NM_147148.3"/>
</dbReference>
<dbReference type="PDB" id="4GTU">
    <property type="method" value="X-ray"/>
    <property type="resolution" value="3.30 A"/>
    <property type="chains" value="A/B/C/D/E/F/G/H=2-218"/>
</dbReference>
<dbReference type="PDBsum" id="4GTU"/>
<dbReference type="SMR" id="Q03013"/>
<dbReference type="BioGRID" id="109203">
    <property type="interactions" value="20"/>
</dbReference>
<dbReference type="FunCoup" id="Q03013">
    <property type="interactions" value="221"/>
</dbReference>
<dbReference type="IntAct" id="Q03013">
    <property type="interactions" value="15"/>
</dbReference>
<dbReference type="STRING" id="9606.ENSP00000358851"/>
<dbReference type="ChEMBL" id="CHEMBL2100"/>
<dbReference type="DrugBank" id="DB03706">
    <property type="generic name" value="1-Hydroxy-2-S-glutathionyl-3-para-nitrophenoxy-propane"/>
</dbReference>
<dbReference type="DrugBank" id="DB00321">
    <property type="generic name" value="Amitriptyline"/>
</dbReference>
<dbReference type="DrugBank" id="DB00291">
    <property type="generic name" value="Chlorambucil"/>
</dbReference>
<dbReference type="DrugBank" id="DB03619">
    <property type="generic name" value="Deoxycholic acid"/>
</dbReference>
<dbReference type="DrugBank" id="DB03597">
    <property type="generic name" value="gamma-Glutamyl[S-(2-iodobenzyl)cysteinyl]glycine"/>
</dbReference>
<dbReference type="DrugBank" id="DB00143">
    <property type="generic name" value="Glutathione"/>
</dbReference>
<dbReference type="DrugBank" id="DB03310">
    <property type="generic name" value="Glutathione disulfide"/>
</dbReference>
<dbReference type="DrugBank" id="DB03003">
    <property type="generic name" value="Glutathione sulfonic acid"/>
</dbReference>
<dbReference type="DrugBank" id="DB04132">
    <property type="generic name" value="S-Hexylglutathione"/>
</dbReference>
<dbReference type="DrugBank" id="DB03032">
    <property type="generic name" value="S-octylglutathione"/>
</dbReference>
<dbReference type="SwissLipids" id="SLP:000001727"/>
<dbReference type="iPTMnet" id="Q03013"/>
<dbReference type="PhosphoSitePlus" id="Q03013"/>
<dbReference type="BioMuta" id="GSTM4"/>
<dbReference type="DMDM" id="1170096"/>
<dbReference type="REPRODUCTION-2DPAGE" id="IPI00008770"/>
<dbReference type="jPOST" id="Q03013"/>
<dbReference type="MassIVE" id="Q03013"/>
<dbReference type="PaxDb" id="9606-ENSP00000358851"/>
<dbReference type="PeptideAtlas" id="Q03013"/>
<dbReference type="ProteomicsDB" id="58159">
    <molecule id="Q03013-1"/>
</dbReference>
<dbReference type="ProteomicsDB" id="58160">
    <molecule id="Q03013-2"/>
</dbReference>
<dbReference type="ProteomicsDB" id="62190"/>
<dbReference type="Pumba" id="Q03013"/>
<dbReference type="Antibodypedia" id="33768">
    <property type="antibodies" value="168 antibodies from 27 providers"/>
</dbReference>
<dbReference type="DNASU" id="2948"/>
<dbReference type="Ensembl" id="ENST00000326729.9">
    <molecule id="Q03013-2"/>
    <property type="protein sequence ID" value="ENSP00000316471.5"/>
    <property type="gene ID" value="ENSG00000168765.19"/>
</dbReference>
<dbReference type="Ensembl" id="ENST00000369836.9">
    <molecule id="Q03013-1"/>
    <property type="protein sequence ID" value="ENSP00000358851.4"/>
    <property type="gene ID" value="ENSG00000168765.19"/>
</dbReference>
<dbReference type="GeneID" id="2948"/>
<dbReference type="KEGG" id="hsa:2948"/>
<dbReference type="MANE-Select" id="ENST00000369836.9">
    <property type="protein sequence ID" value="ENSP00000358851.4"/>
    <property type="RefSeq nucleotide sequence ID" value="NM_000850.5"/>
    <property type="RefSeq protein sequence ID" value="NP_000841.1"/>
</dbReference>
<dbReference type="UCSC" id="uc001dyf.4">
    <molecule id="Q03013-1"/>
    <property type="organism name" value="human"/>
</dbReference>
<dbReference type="AGR" id="HGNC:4636"/>
<dbReference type="CTD" id="2948"/>
<dbReference type="DisGeNET" id="2948"/>
<dbReference type="GeneCards" id="GSTM4"/>
<dbReference type="HGNC" id="HGNC:4636">
    <property type="gene designation" value="GSTM4"/>
</dbReference>
<dbReference type="HPA" id="ENSG00000168765">
    <property type="expression patterns" value="Tissue enhanced (intestine)"/>
</dbReference>
<dbReference type="MIM" id="138333">
    <property type="type" value="gene"/>
</dbReference>
<dbReference type="neXtProt" id="NX_Q03013"/>
<dbReference type="OpenTargets" id="ENSG00000168765"/>
<dbReference type="PharmGKB" id="PA29026"/>
<dbReference type="VEuPathDB" id="HostDB:ENSG00000168765"/>
<dbReference type="eggNOG" id="KOG1695">
    <property type="taxonomic scope" value="Eukaryota"/>
</dbReference>
<dbReference type="GeneTree" id="ENSGT00940000154679"/>
<dbReference type="InParanoid" id="Q03013"/>
<dbReference type="OMA" id="MAPTFAY"/>
<dbReference type="OrthoDB" id="4951845at2759"/>
<dbReference type="PAN-GO" id="Q03013">
    <property type="GO annotations" value="2 GO annotations based on evolutionary models"/>
</dbReference>
<dbReference type="PhylomeDB" id="Q03013"/>
<dbReference type="TreeFam" id="TF353040"/>
<dbReference type="BioCyc" id="MetaCyc:HS09817-MONOMER"/>
<dbReference type="BRENDA" id="2.5.1.18">
    <property type="organism ID" value="2681"/>
</dbReference>
<dbReference type="PathwayCommons" id="Q03013"/>
<dbReference type="Reactome" id="R-HSA-156590">
    <property type="pathway name" value="Glutathione conjugation"/>
</dbReference>
<dbReference type="Reactome" id="R-HSA-9026762">
    <property type="pathway name" value="Biosynthesis of maresin conjugates in tissue regeneration (MCTR)"/>
</dbReference>
<dbReference type="SABIO-RK" id="Q03013"/>
<dbReference type="SignaLink" id="Q03013"/>
<dbReference type="BioGRID-ORCS" id="2948">
    <property type="hits" value="29 hits in 1148 CRISPR screens"/>
</dbReference>
<dbReference type="ChiTaRS" id="GSTM4">
    <property type="organism name" value="human"/>
</dbReference>
<dbReference type="EvolutionaryTrace" id="Q03013"/>
<dbReference type="GeneWiki" id="GSTM4"/>
<dbReference type="GenomeRNAi" id="2948"/>
<dbReference type="Pharos" id="Q03013">
    <property type="development level" value="Tbio"/>
</dbReference>
<dbReference type="PRO" id="PR:Q03013"/>
<dbReference type="Proteomes" id="UP000005640">
    <property type="component" value="Chromosome 1"/>
</dbReference>
<dbReference type="RNAct" id="Q03013">
    <property type="molecule type" value="protein"/>
</dbReference>
<dbReference type="Bgee" id="ENSG00000168765">
    <property type="expression patterns" value="Expressed in hindlimb stylopod muscle and 161 other cell types or tissues"/>
</dbReference>
<dbReference type="ExpressionAtlas" id="Q03013">
    <property type="expression patterns" value="baseline and differential"/>
</dbReference>
<dbReference type="GO" id="GO:0005737">
    <property type="term" value="C:cytoplasm"/>
    <property type="evidence" value="ECO:0000314"/>
    <property type="project" value="BHF-UCL"/>
</dbReference>
<dbReference type="GO" id="GO:0005829">
    <property type="term" value="C:cytosol"/>
    <property type="evidence" value="ECO:0000314"/>
    <property type="project" value="HPA"/>
</dbReference>
<dbReference type="GO" id="GO:0045171">
    <property type="term" value="C:intercellular bridge"/>
    <property type="evidence" value="ECO:0007669"/>
    <property type="project" value="UniProtKB-ARBA"/>
</dbReference>
<dbReference type="GO" id="GO:0019899">
    <property type="term" value="F:enzyme binding"/>
    <property type="evidence" value="ECO:0000353"/>
    <property type="project" value="BHF-UCL"/>
</dbReference>
<dbReference type="GO" id="GO:0043295">
    <property type="term" value="F:glutathione binding"/>
    <property type="evidence" value="ECO:0000314"/>
    <property type="project" value="BHF-UCL"/>
</dbReference>
<dbReference type="GO" id="GO:0004364">
    <property type="term" value="F:glutathione transferase activity"/>
    <property type="evidence" value="ECO:0000314"/>
    <property type="project" value="UniProtKB"/>
</dbReference>
<dbReference type="GO" id="GO:0004464">
    <property type="term" value="F:leukotriene-C4 synthase activity"/>
    <property type="evidence" value="ECO:0000314"/>
    <property type="project" value="UniProtKB"/>
</dbReference>
<dbReference type="GO" id="GO:0042803">
    <property type="term" value="F:protein homodimerization activity"/>
    <property type="evidence" value="ECO:0000353"/>
    <property type="project" value="BHF-UCL"/>
</dbReference>
<dbReference type="GO" id="GO:0006749">
    <property type="term" value="P:glutathione metabolic process"/>
    <property type="evidence" value="ECO:0000314"/>
    <property type="project" value="BHF-UCL"/>
</dbReference>
<dbReference type="GO" id="GO:0042759">
    <property type="term" value="P:long-chain fatty acid biosynthetic process"/>
    <property type="evidence" value="ECO:0000314"/>
    <property type="project" value="UniProtKB"/>
</dbReference>
<dbReference type="GO" id="GO:0018916">
    <property type="term" value="P:nitrobenzene metabolic process"/>
    <property type="evidence" value="ECO:0007669"/>
    <property type="project" value="Ensembl"/>
</dbReference>
<dbReference type="GO" id="GO:0042178">
    <property type="term" value="P:xenobiotic catabolic process"/>
    <property type="evidence" value="ECO:0000314"/>
    <property type="project" value="BHF-UCL"/>
</dbReference>
<dbReference type="CDD" id="cd03209">
    <property type="entry name" value="GST_C_Mu"/>
    <property type="match status" value="1"/>
</dbReference>
<dbReference type="CDD" id="cd03075">
    <property type="entry name" value="GST_N_Mu"/>
    <property type="match status" value="1"/>
</dbReference>
<dbReference type="FunFam" id="3.40.30.10:FF:000603">
    <property type="entry name" value="Glutathione S-transferase Mu 1"/>
    <property type="match status" value="1"/>
</dbReference>
<dbReference type="FunFam" id="1.20.1050.10:FF:000101">
    <property type="entry name" value="Glutathione S-transferase Mu 4"/>
    <property type="match status" value="1"/>
</dbReference>
<dbReference type="Gene3D" id="1.20.1050.10">
    <property type="match status" value="1"/>
</dbReference>
<dbReference type="Gene3D" id="3.40.30.10">
    <property type="entry name" value="Glutaredoxin"/>
    <property type="match status" value="1"/>
</dbReference>
<dbReference type="InterPro" id="IPR010987">
    <property type="entry name" value="Glutathione-S-Trfase_C-like"/>
</dbReference>
<dbReference type="InterPro" id="IPR036282">
    <property type="entry name" value="Glutathione-S-Trfase_C_sf"/>
</dbReference>
<dbReference type="InterPro" id="IPR040079">
    <property type="entry name" value="Glutathione_S-Trfase"/>
</dbReference>
<dbReference type="InterPro" id="IPR004045">
    <property type="entry name" value="Glutathione_S-Trfase_N"/>
</dbReference>
<dbReference type="InterPro" id="IPR004046">
    <property type="entry name" value="GST_C"/>
</dbReference>
<dbReference type="InterPro" id="IPR003081">
    <property type="entry name" value="GST_mu"/>
</dbReference>
<dbReference type="InterPro" id="IPR050213">
    <property type="entry name" value="GST_superfamily"/>
</dbReference>
<dbReference type="InterPro" id="IPR036249">
    <property type="entry name" value="Thioredoxin-like_sf"/>
</dbReference>
<dbReference type="PANTHER" id="PTHR11571">
    <property type="entry name" value="GLUTATHIONE S-TRANSFERASE"/>
    <property type="match status" value="1"/>
</dbReference>
<dbReference type="PANTHER" id="PTHR11571:SF137">
    <property type="entry name" value="GLUTATHIONE S-TRANSFERASE MU 4"/>
    <property type="match status" value="1"/>
</dbReference>
<dbReference type="Pfam" id="PF00043">
    <property type="entry name" value="GST_C"/>
    <property type="match status" value="1"/>
</dbReference>
<dbReference type="Pfam" id="PF02798">
    <property type="entry name" value="GST_N"/>
    <property type="match status" value="1"/>
</dbReference>
<dbReference type="PRINTS" id="PR01267">
    <property type="entry name" value="GSTRNSFRASEM"/>
</dbReference>
<dbReference type="SFLD" id="SFLDG01205">
    <property type="entry name" value="AMPS.1"/>
    <property type="match status" value="1"/>
</dbReference>
<dbReference type="SFLD" id="SFLDS00019">
    <property type="entry name" value="Glutathione_Transferase_(cytos"/>
    <property type="match status" value="1"/>
</dbReference>
<dbReference type="SUPFAM" id="SSF47616">
    <property type="entry name" value="GST C-terminal domain-like"/>
    <property type="match status" value="1"/>
</dbReference>
<dbReference type="SUPFAM" id="SSF52833">
    <property type="entry name" value="Thioredoxin-like"/>
    <property type="match status" value="1"/>
</dbReference>
<dbReference type="PROSITE" id="PS50405">
    <property type="entry name" value="GST_CTER"/>
    <property type="match status" value="1"/>
</dbReference>
<dbReference type="PROSITE" id="PS50404">
    <property type="entry name" value="GST_NTER"/>
    <property type="match status" value="1"/>
</dbReference>
<reference key="1">
    <citation type="journal article" date="1993" name="J. Biol. Chem.">
        <title>Isolation and analysis of the gene and cDNA for a human Mu class glutathione S-transferase, GSTM4.</title>
        <authorList>
            <person name="Comstock K.E."/>
            <person name="Johnson K.J."/>
            <person name="Rifenbery D."/>
            <person name="Henner W.D."/>
        </authorList>
    </citation>
    <scope>NUCLEOTIDE SEQUENCE [GENOMIC DNA / MRNA] (ISOFORM 1)</scope>
</reference>
<reference key="2">
    <citation type="journal article" date="1993" name="Biochem. J.">
        <title>Deduced amino acid sequence, gene structure and chromosomal location of a novel human class Mu glutathione S-transferase, GSTM4.</title>
        <authorList>
            <person name="Zhong S."/>
            <person name="Spurr N.K."/>
            <person name="Hayes J.D."/>
            <person name="Wolf C.R."/>
        </authorList>
    </citation>
    <scope>NUCLEOTIDE SEQUENCE [GENOMIC DNA]</scope>
    <scope>VARIANT MET-212</scope>
</reference>
<reference key="3">
    <citation type="journal article" date="1993" name="Biochem. J.">
        <title>Molecular cloning and heterologous expression of an alternatively spliced human Mu class glutathione S-transferase transcript.</title>
        <authorList>
            <person name="Ross V.L."/>
            <person name="Board P.G."/>
        </authorList>
    </citation>
    <scope>NUCLEOTIDE SEQUENCE [MRNA] (ISOFORM 2)</scope>
    <scope>PROTEIN SEQUENCE OF N-TERMINUS</scope>
    <scope>CATALYTIC ACTIVITY</scope>
    <scope>FUNCTION</scope>
    <scope>SUBCELLULAR LOCATION</scope>
    <scope>SUBUNIT</scope>
    <source>
        <tissue>Testis</tissue>
    </source>
</reference>
<reference key="4">
    <citation type="journal article" date="2006" name="Gene">
        <title>Screening for inter-individual splicing differences in human GSTM4 and the discovery of a single nucleotide substitution related to the tandem skipping of two exons.</title>
        <authorList>
            <person name="Denson J."/>
            <person name="Xi Z."/>
            <person name="Wu Y."/>
            <person name="Yang W."/>
            <person name="Neale G."/>
            <person name="Zhang J."/>
        </authorList>
    </citation>
    <scope>NUCLEOTIDE SEQUENCE [MRNA] (ISOFORM 3)</scope>
</reference>
<reference key="5">
    <citation type="submission" date="2004-06" db="EMBL/GenBank/DDBJ databases">
        <title>Cloning of human full open reading frames in Gateway(TM) system entry vector (pDONR201).</title>
        <authorList>
            <person name="Halleck A."/>
            <person name="Ebert L."/>
            <person name="Mkoundinya M."/>
            <person name="Schick M."/>
            <person name="Eisenstein S."/>
            <person name="Neubert P."/>
            <person name="Kstrang K."/>
            <person name="Schatten R."/>
            <person name="Shen B."/>
            <person name="Henze S."/>
            <person name="Mar W."/>
            <person name="Korn B."/>
            <person name="Zuo D."/>
            <person name="Hu Y."/>
            <person name="LaBaer J."/>
        </authorList>
    </citation>
    <scope>NUCLEOTIDE SEQUENCE [LARGE SCALE MRNA] (ISOFORM 1)</scope>
</reference>
<reference key="6">
    <citation type="journal article" date="2004" name="Nat. Genet.">
        <title>Complete sequencing and characterization of 21,243 full-length human cDNAs.</title>
        <authorList>
            <person name="Ota T."/>
            <person name="Suzuki Y."/>
            <person name="Nishikawa T."/>
            <person name="Otsuki T."/>
            <person name="Sugiyama T."/>
            <person name="Irie R."/>
            <person name="Wakamatsu A."/>
            <person name="Hayashi K."/>
            <person name="Sato H."/>
            <person name="Nagai K."/>
            <person name="Kimura K."/>
            <person name="Makita H."/>
            <person name="Sekine M."/>
            <person name="Obayashi M."/>
            <person name="Nishi T."/>
            <person name="Shibahara T."/>
            <person name="Tanaka T."/>
            <person name="Ishii S."/>
            <person name="Yamamoto J."/>
            <person name="Saito K."/>
            <person name="Kawai Y."/>
            <person name="Isono Y."/>
            <person name="Nakamura Y."/>
            <person name="Nagahari K."/>
            <person name="Murakami K."/>
            <person name="Yasuda T."/>
            <person name="Iwayanagi T."/>
            <person name="Wagatsuma M."/>
            <person name="Shiratori A."/>
            <person name="Sudo H."/>
            <person name="Hosoiri T."/>
            <person name="Kaku Y."/>
            <person name="Kodaira H."/>
            <person name="Kondo H."/>
            <person name="Sugawara M."/>
            <person name="Takahashi M."/>
            <person name="Kanda K."/>
            <person name="Yokoi T."/>
            <person name="Furuya T."/>
            <person name="Kikkawa E."/>
            <person name="Omura Y."/>
            <person name="Abe K."/>
            <person name="Kamihara K."/>
            <person name="Katsuta N."/>
            <person name="Sato K."/>
            <person name="Tanikawa M."/>
            <person name="Yamazaki M."/>
            <person name="Ninomiya K."/>
            <person name="Ishibashi T."/>
            <person name="Yamashita H."/>
            <person name="Murakawa K."/>
            <person name="Fujimori K."/>
            <person name="Tanai H."/>
            <person name="Kimata M."/>
            <person name="Watanabe M."/>
            <person name="Hiraoka S."/>
            <person name="Chiba Y."/>
            <person name="Ishida S."/>
            <person name="Ono Y."/>
            <person name="Takiguchi S."/>
            <person name="Watanabe S."/>
            <person name="Yosida M."/>
            <person name="Hotuta T."/>
            <person name="Kusano J."/>
            <person name="Kanehori K."/>
            <person name="Takahashi-Fujii A."/>
            <person name="Hara H."/>
            <person name="Tanase T.-O."/>
            <person name="Nomura Y."/>
            <person name="Togiya S."/>
            <person name="Komai F."/>
            <person name="Hara R."/>
            <person name="Takeuchi K."/>
            <person name="Arita M."/>
            <person name="Imose N."/>
            <person name="Musashino K."/>
            <person name="Yuuki H."/>
            <person name="Oshima A."/>
            <person name="Sasaki N."/>
            <person name="Aotsuka S."/>
            <person name="Yoshikawa Y."/>
            <person name="Matsunawa H."/>
            <person name="Ichihara T."/>
            <person name="Shiohata N."/>
            <person name="Sano S."/>
            <person name="Moriya S."/>
            <person name="Momiyama H."/>
            <person name="Satoh N."/>
            <person name="Takami S."/>
            <person name="Terashima Y."/>
            <person name="Suzuki O."/>
            <person name="Nakagawa S."/>
            <person name="Senoh A."/>
            <person name="Mizoguchi H."/>
            <person name="Goto Y."/>
            <person name="Shimizu F."/>
            <person name="Wakebe H."/>
            <person name="Hishigaki H."/>
            <person name="Watanabe T."/>
            <person name="Sugiyama A."/>
            <person name="Takemoto M."/>
            <person name="Kawakami B."/>
            <person name="Yamazaki M."/>
            <person name="Watanabe K."/>
            <person name="Kumagai A."/>
            <person name="Itakura S."/>
            <person name="Fukuzumi Y."/>
            <person name="Fujimori Y."/>
            <person name="Komiyama M."/>
            <person name="Tashiro H."/>
            <person name="Tanigami A."/>
            <person name="Fujiwara T."/>
            <person name="Ono T."/>
            <person name="Yamada K."/>
            <person name="Fujii Y."/>
            <person name="Ozaki K."/>
            <person name="Hirao M."/>
            <person name="Ohmori Y."/>
            <person name="Kawabata A."/>
            <person name="Hikiji T."/>
            <person name="Kobatake N."/>
            <person name="Inagaki H."/>
            <person name="Ikema Y."/>
            <person name="Okamoto S."/>
            <person name="Okitani R."/>
            <person name="Kawakami T."/>
            <person name="Noguchi S."/>
            <person name="Itoh T."/>
            <person name="Shigeta K."/>
            <person name="Senba T."/>
            <person name="Matsumura K."/>
            <person name="Nakajima Y."/>
            <person name="Mizuno T."/>
            <person name="Morinaga M."/>
            <person name="Sasaki M."/>
            <person name="Togashi T."/>
            <person name="Oyama M."/>
            <person name="Hata H."/>
            <person name="Watanabe M."/>
            <person name="Komatsu T."/>
            <person name="Mizushima-Sugano J."/>
            <person name="Satoh T."/>
            <person name="Shirai Y."/>
            <person name="Takahashi Y."/>
            <person name="Nakagawa K."/>
            <person name="Okumura K."/>
            <person name="Nagase T."/>
            <person name="Nomura N."/>
            <person name="Kikuchi H."/>
            <person name="Masuho Y."/>
            <person name="Yamashita R."/>
            <person name="Nakai K."/>
            <person name="Yada T."/>
            <person name="Nakamura Y."/>
            <person name="Ohara O."/>
            <person name="Isogai T."/>
            <person name="Sugano S."/>
        </authorList>
    </citation>
    <scope>NUCLEOTIDE SEQUENCE [LARGE SCALE MRNA] (ISOFORM 1)</scope>
    <source>
        <tissue>Skeletal muscle</tissue>
    </source>
</reference>
<reference key="7">
    <citation type="journal article" date="2006" name="Nature">
        <title>The DNA sequence and biological annotation of human chromosome 1.</title>
        <authorList>
            <person name="Gregory S.G."/>
            <person name="Barlow K.F."/>
            <person name="McLay K.E."/>
            <person name="Kaul R."/>
            <person name="Swarbreck D."/>
            <person name="Dunham A."/>
            <person name="Scott C.E."/>
            <person name="Howe K.L."/>
            <person name="Woodfine K."/>
            <person name="Spencer C.C.A."/>
            <person name="Jones M.C."/>
            <person name="Gillson C."/>
            <person name="Searle S."/>
            <person name="Zhou Y."/>
            <person name="Kokocinski F."/>
            <person name="McDonald L."/>
            <person name="Evans R."/>
            <person name="Phillips K."/>
            <person name="Atkinson A."/>
            <person name="Cooper R."/>
            <person name="Jones C."/>
            <person name="Hall R.E."/>
            <person name="Andrews T.D."/>
            <person name="Lloyd C."/>
            <person name="Ainscough R."/>
            <person name="Almeida J.P."/>
            <person name="Ambrose K.D."/>
            <person name="Anderson F."/>
            <person name="Andrew R.W."/>
            <person name="Ashwell R.I.S."/>
            <person name="Aubin K."/>
            <person name="Babbage A.K."/>
            <person name="Bagguley C.L."/>
            <person name="Bailey J."/>
            <person name="Beasley H."/>
            <person name="Bethel G."/>
            <person name="Bird C.P."/>
            <person name="Bray-Allen S."/>
            <person name="Brown J.Y."/>
            <person name="Brown A.J."/>
            <person name="Buckley D."/>
            <person name="Burton J."/>
            <person name="Bye J."/>
            <person name="Carder C."/>
            <person name="Chapman J.C."/>
            <person name="Clark S.Y."/>
            <person name="Clarke G."/>
            <person name="Clee C."/>
            <person name="Cobley V."/>
            <person name="Collier R.E."/>
            <person name="Corby N."/>
            <person name="Coville G.J."/>
            <person name="Davies J."/>
            <person name="Deadman R."/>
            <person name="Dunn M."/>
            <person name="Earthrowl M."/>
            <person name="Ellington A.G."/>
            <person name="Errington H."/>
            <person name="Frankish A."/>
            <person name="Frankland J."/>
            <person name="French L."/>
            <person name="Garner P."/>
            <person name="Garnett J."/>
            <person name="Gay L."/>
            <person name="Ghori M.R.J."/>
            <person name="Gibson R."/>
            <person name="Gilby L.M."/>
            <person name="Gillett W."/>
            <person name="Glithero R.J."/>
            <person name="Grafham D.V."/>
            <person name="Griffiths C."/>
            <person name="Griffiths-Jones S."/>
            <person name="Grocock R."/>
            <person name="Hammond S."/>
            <person name="Harrison E.S.I."/>
            <person name="Hart E."/>
            <person name="Haugen E."/>
            <person name="Heath P.D."/>
            <person name="Holmes S."/>
            <person name="Holt K."/>
            <person name="Howden P.J."/>
            <person name="Hunt A.R."/>
            <person name="Hunt S.E."/>
            <person name="Hunter G."/>
            <person name="Isherwood J."/>
            <person name="James R."/>
            <person name="Johnson C."/>
            <person name="Johnson D."/>
            <person name="Joy A."/>
            <person name="Kay M."/>
            <person name="Kershaw J.K."/>
            <person name="Kibukawa M."/>
            <person name="Kimberley A.M."/>
            <person name="King A."/>
            <person name="Knights A.J."/>
            <person name="Lad H."/>
            <person name="Laird G."/>
            <person name="Lawlor S."/>
            <person name="Leongamornlert D.A."/>
            <person name="Lloyd D.M."/>
            <person name="Loveland J."/>
            <person name="Lovell J."/>
            <person name="Lush M.J."/>
            <person name="Lyne R."/>
            <person name="Martin S."/>
            <person name="Mashreghi-Mohammadi M."/>
            <person name="Matthews L."/>
            <person name="Matthews N.S.W."/>
            <person name="McLaren S."/>
            <person name="Milne S."/>
            <person name="Mistry S."/>
            <person name="Moore M.J.F."/>
            <person name="Nickerson T."/>
            <person name="O'Dell C.N."/>
            <person name="Oliver K."/>
            <person name="Palmeiri A."/>
            <person name="Palmer S.A."/>
            <person name="Parker A."/>
            <person name="Patel D."/>
            <person name="Pearce A.V."/>
            <person name="Peck A.I."/>
            <person name="Pelan S."/>
            <person name="Phelps K."/>
            <person name="Phillimore B.J."/>
            <person name="Plumb R."/>
            <person name="Rajan J."/>
            <person name="Raymond C."/>
            <person name="Rouse G."/>
            <person name="Saenphimmachak C."/>
            <person name="Sehra H.K."/>
            <person name="Sheridan E."/>
            <person name="Shownkeen R."/>
            <person name="Sims S."/>
            <person name="Skuce C.D."/>
            <person name="Smith M."/>
            <person name="Steward C."/>
            <person name="Subramanian S."/>
            <person name="Sycamore N."/>
            <person name="Tracey A."/>
            <person name="Tromans A."/>
            <person name="Van Helmond Z."/>
            <person name="Wall M."/>
            <person name="Wallis J.M."/>
            <person name="White S."/>
            <person name="Whitehead S.L."/>
            <person name="Wilkinson J.E."/>
            <person name="Willey D.L."/>
            <person name="Williams H."/>
            <person name="Wilming L."/>
            <person name="Wray P.W."/>
            <person name="Wu Z."/>
            <person name="Coulson A."/>
            <person name="Vaudin M."/>
            <person name="Sulston J.E."/>
            <person name="Durbin R.M."/>
            <person name="Hubbard T."/>
            <person name="Wooster R."/>
            <person name="Dunham I."/>
            <person name="Carter N.P."/>
            <person name="McVean G."/>
            <person name="Ross M.T."/>
            <person name="Harrow J."/>
            <person name="Olson M.V."/>
            <person name="Beck S."/>
            <person name="Rogers J."/>
            <person name="Bentley D.R."/>
        </authorList>
    </citation>
    <scope>NUCLEOTIDE SEQUENCE [LARGE SCALE GENOMIC DNA]</scope>
</reference>
<reference key="8">
    <citation type="submission" date="2005-07" db="EMBL/GenBank/DDBJ databases">
        <authorList>
            <person name="Mural R.J."/>
            <person name="Istrail S."/>
            <person name="Sutton G.G."/>
            <person name="Florea L."/>
            <person name="Halpern A.L."/>
            <person name="Mobarry C.M."/>
            <person name="Lippert R."/>
            <person name="Walenz B."/>
            <person name="Shatkay H."/>
            <person name="Dew I."/>
            <person name="Miller J.R."/>
            <person name="Flanigan M.J."/>
            <person name="Edwards N.J."/>
            <person name="Bolanos R."/>
            <person name="Fasulo D."/>
            <person name="Halldorsson B.V."/>
            <person name="Hannenhalli S."/>
            <person name="Turner R."/>
            <person name="Yooseph S."/>
            <person name="Lu F."/>
            <person name="Nusskern D.R."/>
            <person name="Shue B.C."/>
            <person name="Zheng X.H."/>
            <person name="Zhong F."/>
            <person name="Delcher A.L."/>
            <person name="Huson D.H."/>
            <person name="Kravitz S.A."/>
            <person name="Mouchard L."/>
            <person name="Reinert K."/>
            <person name="Remington K.A."/>
            <person name="Clark A.G."/>
            <person name="Waterman M.S."/>
            <person name="Eichler E.E."/>
            <person name="Adams M.D."/>
            <person name="Hunkapiller M.W."/>
            <person name="Myers E.W."/>
            <person name="Venter J.C."/>
        </authorList>
    </citation>
    <scope>NUCLEOTIDE SEQUENCE [LARGE SCALE GENOMIC DNA]</scope>
</reference>
<reference key="9">
    <citation type="journal article" date="2004" name="Genome Res.">
        <title>The status, quality, and expansion of the NIH full-length cDNA project: the Mammalian Gene Collection (MGC).</title>
        <authorList>
            <consortium name="The MGC Project Team"/>
        </authorList>
    </citation>
    <scope>NUCLEOTIDE SEQUENCE [LARGE SCALE MRNA] (ISOFORM 1)</scope>
    <source>
        <tissue>Eye</tissue>
        <tissue>Lung</tissue>
    </source>
</reference>
<reference key="10">
    <citation type="journal article" date="1991" name="Biochem. J.">
        <title>Structure of human glutathione S-transferase class Mu genes.</title>
        <authorList>
            <person name="Taylor J.B."/>
            <person name="Oliver J."/>
            <person name="Sherrington R."/>
            <person name="Pemble S.E."/>
        </authorList>
    </citation>
    <scope>NUCLEOTIDE SEQUENCE [GENOMIC DNA] OF 39-160</scope>
    <source>
        <tissue>Lymphocyte</tissue>
    </source>
</reference>
<reference key="11">
    <citation type="journal article" date="1994" name="Arch. Biochem. Biophys.">
        <title>A comparison of the enzymatic and physicochemical properties of human glutathione transferase M4-4 and three other human Mu class enzymes.</title>
        <authorList>
            <person name="Comstock K.E."/>
            <person name="Widersten M."/>
            <person name="Hao X.Y."/>
            <person name="Henner W.D."/>
            <person name="Mannervik B."/>
        </authorList>
    </citation>
    <scope>CATALYTIC ACTIVITY</scope>
    <scope>FUNCTION</scope>
    <scope>BIOPHYSICOCHEMICAL PROPERTIES</scope>
</reference>
<reference key="12">
    <citation type="journal article" date="1999" name="Biochemistry">
        <title>An asparagine-phenylalanine substitution accounts for catalytic differences between hGSTM3-3 and other human class mu glutathione S-transferases.</title>
        <authorList>
            <person name="Patskovsky Y.V."/>
            <person name="Patskovska L.N."/>
            <person name="Listowsky I."/>
        </authorList>
    </citation>
    <scope>X-RAY CRYSTALLOGRAPHY (3.3 ANGSTROMS)</scope>
</reference>
<reference key="13">
    <citation type="journal article" date="2016" name="Proc. Natl. Acad. Sci. U.S.A.">
        <title>Maresin conjugates in tissue regeneration biosynthesis enzymes in human macrophages.</title>
        <authorList>
            <person name="Dalli J."/>
            <person name="Vlasakov I."/>
            <person name="Riley I.R."/>
            <person name="Rodriguez A.R."/>
            <person name="Spur B.W."/>
            <person name="Petasis N.A."/>
            <person name="Chiang N."/>
            <person name="Serhan C.N."/>
        </authorList>
    </citation>
    <scope>CATALYTIC ACTIVITY</scope>
    <scope>FUNCTION</scope>
    <scope>BIOPHYSICOCHEMICAL PROPERTIES</scope>
</reference>
<keyword id="KW-0002">3D-structure</keyword>
<keyword id="KW-0025">Alternative splicing</keyword>
<keyword id="KW-0963">Cytoplasm</keyword>
<keyword id="KW-0903">Direct protein sequencing</keyword>
<keyword id="KW-0443">Lipid metabolism</keyword>
<keyword id="KW-0456">Lyase</keyword>
<keyword id="KW-1267">Proteomics identification</keyword>
<keyword id="KW-1185">Reference proteome</keyword>
<keyword id="KW-0808">Transferase</keyword>
<protein>
    <recommendedName>
        <fullName>Glutathione S-transferase Mu 4</fullName>
        <ecNumber evidence="4 5">2.5.1.18</ecNumber>
    </recommendedName>
    <alternativeName>
        <fullName>GST class-mu 4</fullName>
    </alternativeName>
    <alternativeName>
        <fullName>GST-Mu2</fullName>
    </alternativeName>
    <alternativeName>
        <fullName>GSTM4-4</fullName>
    </alternativeName>
    <alternativeName>
        <fullName>Leukotriene C4 synthase GSTM4</fullName>
        <ecNumber evidence="3">4.4.1.20</ecNumber>
    </alternativeName>
</protein>
<feature type="chain" id="PRO_0000185824" description="Glutathione S-transferase Mu 4">
    <location>
        <begin position="1"/>
        <end position="218"/>
    </location>
</feature>
<feature type="domain" description="GST N-terminal">
    <location>
        <begin position="2"/>
        <end position="88"/>
    </location>
</feature>
<feature type="domain" description="GST C-terminal">
    <location>
        <begin position="90"/>
        <end position="208"/>
    </location>
</feature>
<feature type="binding site" evidence="2">
    <location>
        <begin position="7"/>
        <end position="8"/>
    </location>
    <ligand>
        <name>glutathione</name>
        <dbReference type="ChEBI" id="CHEBI:57925"/>
    </ligand>
</feature>
<feature type="binding site" evidence="2">
    <location>
        <begin position="46"/>
        <end position="50"/>
    </location>
    <ligand>
        <name>glutathione</name>
        <dbReference type="ChEBI" id="CHEBI:57925"/>
    </ligand>
</feature>
<feature type="binding site" evidence="2">
    <location>
        <begin position="59"/>
        <end position="60"/>
    </location>
    <ligand>
        <name>glutathione</name>
        <dbReference type="ChEBI" id="CHEBI:57925"/>
    </ligand>
</feature>
<feature type="binding site" evidence="2">
    <location>
        <begin position="72"/>
        <end position="73"/>
    </location>
    <ligand>
        <name>glutathione</name>
        <dbReference type="ChEBI" id="CHEBI:57925"/>
    </ligand>
</feature>
<feature type="binding site" evidence="1">
    <location>
        <position position="116"/>
    </location>
    <ligand>
        <name>substrate</name>
    </ligand>
</feature>
<feature type="splice variant" id="VSP_047688" description="In isoform 3." evidence="7">
    <location>
        <begin position="60"/>
        <end position="120"/>
    </location>
</feature>
<feature type="splice variant" id="VSP_011773" description="In isoform 2." evidence="8">
    <original>GLEKIS</original>
    <variation>VSCGIM</variation>
    <location>
        <begin position="190"/>
        <end position="195"/>
    </location>
</feature>
<feature type="splice variant" id="VSP_011774" description="In isoform 2." evidence="8">
    <location>
        <begin position="196"/>
        <end position="218"/>
    </location>
</feature>
<feature type="sequence variant" id="VAR_033979" description="In dbSNP:rs3211190.">
    <original>S</original>
    <variation>P</variation>
    <location>
        <position position="2"/>
    </location>
</feature>
<feature type="sequence variant" id="VAR_033980" description="In dbSNP:rs17838158.">
    <original>A</original>
    <variation>V</variation>
    <location>
        <position position="160"/>
    </location>
</feature>
<feature type="sequence variant" id="VAR_049487" description="In dbSNP:rs112611763.">
    <original>L</original>
    <variation>V</variation>
    <location>
        <position position="208"/>
    </location>
</feature>
<feature type="sequence variant" id="VAR_049488" description="In dbSNP:rs112330158.">
    <original>Y</original>
    <variation>F</variation>
    <location>
        <position position="209"/>
    </location>
</feature>
<feature type="sequence variant" id="VAR_049489" description="In dbSNP:rs200675176.">
    <original>R</original>
    <variation>K</variation>
    <location>
        <position position="211"/>
    </location>
</feature>
<feature type="sequence variant" id="VAR_049490" description="In dbSNP:rs149370166." evidence="6">
    <original>V</original>
    <variation>M</variation>
    <location>
        <position position="212"/>
    </location>
</feature>
<feature type="sequence conflict" description="In Ref. 2; CAA48637." evidence="9" ref="2">
    <original>SMT</original>
    <variation>PMI</variation>
    <location>
        <begin position="2"/>
        <end position="4"/>
    </location>
</feature>
<feature type="sequence conflict" description="In Ref. 1; AAA57346." evidence="9" ref="1">
    <original>I</original>
    <variation>M</variation>
    <location>
        <position position="17"/>
    </location>
</feature>
<feature type="sequence conflict" description="In Ref. 2; CAA48637." evidence="9" ref="2">
    <original>D</original>
    <variation>G</variation>
    <location>
        <position position="37"/>
    </location>
</feature>
<feature type="strand" evidence="11">
    <location>
        <begin position="3"/>
        <end position="10"/>
    </location>
</feature>
<feature type="helix" evidence="11">
    <location>
        <begin position="14"/>
        <end position="23"/>
    </location>
</feature>
<feature type="strand" evidence="11">
    <location>
        <begin position="28"/>
        <end position="33"/>
    </location>
</feature>
<feature type="turn" evidence="11">
    <location>
        <begin position="38"/>
        <end position="41"/>
    </location>
</feature>
<feature type="helix" evidence="11">
    <location>
        <begin position="44"/>
        <end position="50"/>
    </location>
</feature>
<feature type="helix" evidence="11">
    <location>
        <begin position="51"/>
        <end position="53"/>
    </location>
</feature>
<feature type="strand" evidence="11">
    <location>
        <begin position="60"/>
        <end position="64"/>
    </location>
</feature>
<feature type="strand" evidence="11">
    <location>
        <begin position="69"/>
        <end position="72"/>
    </location>
</feature>
<feature type="helix" evidence="11">
    <location>
        <begin position="73"/>
        <end position="83"/>
    </location>
</feature>
<feature type="helix" evidence="11">
    <location>
        <begin position="91"/>
        <end position="114"/>
    </location>
</feature>
<feature type="helix" evidence="11">
    <location>
        <begin position="120"/>
        <end position="142"/>
    </location>
</feature>
<feature type="strand" evidence="11">
    <location>
        <begin position="150"/>
        <end position="152"/>
    </location>
</feature>
<feature type="helix" evidence="11">
    <location>
        <begin position="155"/>
        <end position="170"/>
    </location>
</feature>
<feature type="helix" evidence="11">
    <location>
        <begin position="179"/>
        <end position="190"/>
    </location>
</feature>
<feature type="helix" evidence="11">
    <location>
        <begin position="192"/>
        <end position="198"/>
    </location>
</feature>
<feature type="turn" evidence="11">
    <location>
        <begin position="214"/>
        <end position="216"/>
    </location>
</feature>
<name>GSTM4_HUMAN</name>
<organism>
    <name type="scientific">Homo sapiens</name>
    <name type="common">Human</name>
    <dbReference type="NCBI Taxonomy" id="9606"/>
    <lineage>
        <taxon>Eukaryota</taxon>
        <taxon>Metazoa</taxon>
        <taxon>Chordata</taxon>
        <taxon>Craniata</taxon>
        <taxon>Vertebrata</taxon>
        <taxon>Euteleostomi</taxon>
        <taxon>Mammalia</taxon>
        <taxon>Eutheria</taxon>
        <taxon>Euarchontoglires</taxon>
        <taxon>Primates</taxon>
        <taxon>Haplorrhini</taxon>
        <taxon>Catarrhini</taxon>
        <taxon>Hominidae</taxon>
        <taxon>Homo</taxon>
    </lineage>
</organism>